<feature type="chain" id="PRO_0000325532" description="3-dehydroquinate dehydratase">
    <location>
        <begin position="1"/>
        <end position="245"/>
    </location>
</feature>
<feature type="active site" description="Proton donor/acceptor" evidence="1">
    <location>
        <position position="132"/>
    </location>
</feature>
<feature type="active site" description="Schiff-base intermediate with substrate" evidence="1">
    <location>
        <position position="158"/>
    </location>
</feature>
<feature type="binding site" evidence="1">
    <location>
        <begin position="35"/>
        <end position="37"/>
    </location>
    <ligand>
        <name>3-dehydroquinate</name>
        <dbReference type="ChEBI" id="CHEBI:32364"/>
    </ligand>
</feature>
<feature type="binding site" evidence="1">
    <location>
        <position position="70"/>
    </location>
    <ligand>
        <name>3-dehydroquinate</name>
        <dbReference type="ChEBI" id="CHEBI:32364"/>
    </ligand>
</feature>
<feature type="binding site" evidence="1">
    <location>
        <position position="199"/>
    </location>
    <ligand>
        <name>3-dehydroquinate</name>
        <dbReference type="ChEBI" id="CHEBI:32364"/>
    </ligand>
</feature>
<feature type="binding site" evidence="1">
    <location>
        <position position="220"/>
    </location>
    <ligand>
        <name>3-dehydroquinate</name>
        <dbReference type="ChEBI" id="CHEBI:32364"/>
    </ligand>
</feature>
<feature type="binding site" evidence="1">
    <location>
        <position position="224"/>
    </location>
    <ligand>
        <name>3-dehydroquinate</name>
        <dbReference type="ChEBI" id="CHEBI:32364"/>
    </ligand>
</feature>
<organism>
    <name type="scientific">Haloquadratum walsbyi (strain DSM 16790 / HBSQ001)</name>
    <dbReference type="NCBI Taxonomy" id="362976"/>
    <lineage>
        <taxon>Archaea</taxon>
        <taxon>Methanobacteriati</taxon>
        <taxon>Methanobacteriota</taxon>
        <taxon>Stenosarchaea group</taxon>
        <taxon>Halobacteria</taxon>
        <taxon>Halobacteriales</taxon>
        <taxon>Haloferacaceae</taxon>
        <taxon>Haloquadratum</taxon>
    </lineage>
</organism>
<keyword id="KW-0028">Amino-acid biosynthesis</keyword>
<keyword id="KW-0057">Aromatic amino acid biosynthesis</keyword>
<keyword id="KW-0456">Lyase</keyword>
<keyword id="KW-1185">Reference proteome</keyword>
<keyword id="KW-0704">Schiff base</keyword>
<proteinExistence type="inferred from homology"/>
<dbReference type="EC" id="4.2.1.10" evidence="1"/>
<dbReference type="EMBL" id="AM180088">
    <property type="protein sequence ID" value="CAJ51284.1"/>
    <property type="molecule type" value="Genomic_DNA"/>
</dbReference>
<dbReference type="RefSeq" id="WP_011570449.1">
    <property type="nucleotide sequence ID" value="NC_008212.1"/>
</dbReference>
<dbReference type="SMR" id="Q18DY7"/>
<dbReference type="STRING" id="362976.HQ_1154A"/>
<dbReference type="GeneID" id="4193721"/>
<dbReference type="KEGG" id="hwa:HQ_1154A"/>
<dbReference type="eggNOG" id="arCOG02097">
    <property type="taxonomic scope" value="Archaea"/>
</dbReference>
<dbReference type="HOGENOM" id="CLU_064444_1_0_2"/>
<dbReference type="UniPathway" id="UPA00053">
    <property type="reaction ID" value="UER00086"/>
</dbReference>
<dbReference type="Proteomes" id="UP000001975">
    <property type="component" value="Chromosome"/>
</dbReference>
<dbReference type="GO" id="GO:0003855">
    <property type="term" value="F:3-dehydroquinate dehydratase activity"/>
    <property type="evidence" value="ECO:0007669"/>
    <property type="project" value="UniProtKB-UniRule"/>
</dbReference>
<dbReference type="GO" id="GO:0046279">
    <property type="term" value="P:3,4-dihydroxybenzoate biosynthetic process"/>
    <property type="evidence" value="ECO:0007669"/>
    <property type="project" value="TreeGrafter"/>
</dbReference>
<dbReference type="GO" id="GO:0008652">
    <property type="term" value="P:amino acid biosynthetic process"/>
    <property type="evidence" value="ECO:0007669"/>
    <property type="project" value="UniProtKB-KW"/>
</dbReference>
<dbReference type="GO" id="GO:0009073">
    <property type="term" value="P:aromatic amino acid family biosynthetic process"/>
    <property type="evidence" value="ECO:0007669"/>
    <property type="project" value="UniProtKB-KW"/>
</dbReference>
<dbReference type="GO" id="GO:0009423">
    <property type="term" value="P:chorismate biosynthetic process"/>
    <property type="evidence" value="ECO:0007669"/>
    <property type="project" value="UniProtKB-UniRule"/>
</dbReference>
<dbReference type="CDD" id="cd00502">
    <property type="entry name" value="DHQase_I"/>
    <property type="match status" value="1"/>
</dbReference>
<dbReference type="Gene3D" id="3.20.20.70">
    <property type="entry name" value="Aldolase class I"/>
    <property type="match status" value="1"/>
</dbReference>
<dbReference type="HAMAP" id="MF_00214">
    <property type="entry name" value="AroD"/>
    <property type="match status" value="1"/>
</dbReference>
<dbReference type="InterPro" id="IPR013785">
    <property type="entry name" value="Aldolase_TIM"/>
</dbReference>
<dbReference type="InterPro" id="IPR001381">
    <property type="entry name" value="DHquinase_I"/>
</dbReference>
<dbReference type="InterPro" id="IPR050146">
    <property type="entry name" value="Type-I_3-dehydroquinase"/>
</dbReference>
<dbReference type="PANTHER" id="PTHR43699">
    <property type="entry name" value="3-DEHYDROQUINATE DEHYDRATASE"/>
    <property type="match status" value="1"/>
</dbReference>
<dbReference type="PANTHER" id="PTHR43699:SF1">
    <property type="entry name" value="3-DEHYDROQUINATE DEHYDRATASE"/>
    <property type="match status" value="1"/>
</dbReference>
<dbReference type="Pfam" id="PF01487">
    <property type="entry name" value="DHquinase_I"/>
    <property type="match status" value="1"/>
</dbReference>
<dbReference type="SUPFAM" id="SSF51569">
    <property type="entry name" value="Aldolase"/>
    <property type="match status" value="1"/>
</dbReference>
<accession>Q18DY7</accession>
<reference key="1">
    <citation type="journal article" date="2006" name="BMC Genomics">
        <title>The genome of the square archaeon Haloquadratum walsbyi: life at the limits of water activity.</title>
        <authorList>
            <person name="Bolhuis H."/>
            <person name="Palm P."/>
            <person name="Wende A."/>
            <person name="Falb M."/>
            <person name="Rampp M."/>
            <person name="Rodriguez-Valera F."/>
            <person name="Pfeiffer F."/>
            <person name="Oesterhelt D."/>
        </authorList>
    </citation>
    <scope>NUCLEOTIDE SEQUENCE [LARGE SCALE GENOMIC DNA]</scope>
    <source>
        <strain>DSM 16790 / HBSQ001</strain>
    </source>
</reference>
<name>AROD_HALWD</name>
<sequence length="245" mass="26279">MTSTQAVSFDTFQLAAATADLSDESAASDYADIVEFRLDLAYADTSLPDPLTAISAYDHSSSLPLIVTNRPEWEGGAYDGETIDRLEMLITAAKHDAVIAVDIELETLKSQHGKKVARDIRNSGAVIIASTHDFTSTPQQSVLHERLHTAAQLGDIGKLAVTAQTHRDALRVLAATEQASQWGDTVATMAMGALGQHTRVVAPLYGSRIGYAPVNPTDATAPGQYDIKTLSEMIDTLTHTKVEDD</sequence>
<evidence type="ECO:0000255" key="1">
    <source>
        <dbReference type="HAMAP-Rule" id="MF_00214"/>
    </source>
</evidence>
<comment type="function">
    <text evidence="1">Involved in the third step of the chorismate pathway, which leads to the biosynthesis of aromatic amino acids. Catalyzes the cis-dehydration of 3-dehydroquinate (DHQ) and introduces the first double bond of the aromatic ring to yield 3-dehydroshikimate.</text>
</comment>
<comment type="catalytic activity">
    <reaction evidence="1">
        <text>3-dehydroquinate = 3-dehydroshikimate + H2O</text>
        <dbReference type="Rhea" id="RHEA:21096"/>
        <dbReference type="ChEBI" id="CHEBI:15377"/>
        <dbReference type="ChEBI" id="CHEBI:16630"/>
        <dbReference type="ChEBI" id="CHEBI:32364"/>
        <dbReference type="EC" id="4.2.1.10"/>
    </reaction>
</comment>
<comment type="pathway">
    <text evidence="1">Metabolic intermediate biosynthesis; chorismate biosynthesis; chorismate from D-erythrose 4-phosphate and phosphoenolpyruvate: step 3/7.</text>
</comment>
<comment type="subunit">
    <text evidence="1">Homodimer.</text>
</comment>
<comment type="similarity">
    <text evidence="1">Belongs to the type-I 3-dehydroquinase family.</text>
</comment>
<gene>
    <name evidence="1" type="primary">aroD</name>
    <name type="ordered locus">HQ_1154A</name>
</gene>
<protein>
    <recommendedName>
        <fullName evidence="1">3-dehydroquinate dehydratase</fullName>
        <shortName evidence="1">3-dehydroquinase</shortName>
        <ecNumber evidence="1">4.2.1.10</ecNumber>
    </recommendedName>
    <alternativeName>
        <fullName evidence="1">Type I DHQase</fullName>
    </alternativeName>
    <alternativeName>
        <fullName evidence="1">Type I dehydroquinase</fullName>
        <shortName evidence="1">DHQ1</shortName>
    </alternativeName>
</protein>